<dbReference type="EMBL" id="AB033535">
    <property type="protein sequence ID" value="BAB17624.1"/>
    <property type="molecule type" value="mRNA"/>
</dbReference>
<dbReference type="EMBL" id="AP003514">
    <property type="protein sequence ID" value="BAD35266.1"/>
    <property type="molecule type" value="Genomic_DNA"/>
</dbReference>
<dbReference type="EMBL" id="AP004738">
    <property type="protein sequence ID" value="BAD35822.1"/>
    <property type="molecule type" value="Genomic_DNA"/>
</dbReference>
<dbReference type="EMBL" id="AP008212">
    <property type="protein sequence ID" value="BAF18951.1"/>
    <property type="molecule type" value="Genomic_DNA"/>
</dbReference>
<dbReference type="EMBL" id="AP014962">
    <property type="protein sequence ID" value="BAS96586.1"/>
    <property type="molecule type" value="Genomic_DNA"/>
</dbReference>
<dbReference type="EMBL" id="CM000143">
    <property type="protein sequence ID" value="EAZ36112.1"/>
    <property type="status" value="ALT_INIT"/>
    <property type="molecule type" value="Genomic_DNA"/>
</dbReference>
<dbReference type="EMBL" id="AK061876">
    <property type="protein sequence ID" value="BAG88160.1"/>
    <property type="molecule type" value="mRNA"/>
</dbReference>
<dbReference type="EMBL" id="AK070538">
    <property type="protein sequence ID" value="BAG92017.1"/>
    <property type="molecule type" value="mRNA"/>
</dbReference>
<dbReference type="RefSeq" id="XP_015627290.1">
    <property type="nucleotide sequence ID" value="XM_015771804.1"/>
</dbReference>
<dbReference type="RefSeq" id="XP_015644004.1">
    <property type="nucleotide sequence ID" value="XM_015788518.1"/>
</dbReference>
<dbReference type="SMR" id="P0DKK0"/>
<dbReference type="FunCoup" id="P0DKK0">
    <property type="interactions" value="2987"/>
</dbReference>
<dbReference type="STRING" id="39947.P0DKK0"/>
<dbReference type="PaxDb" id="39947-P0DKK0"/>
<dbReference type="EnsemblPlants" id="Os02t0784700-01">
    <property type="protein sequence ID" value="Os02t0784700-01"/>
    <property type="gene ID" value="Os02g0784700"/>
</dbReference>
<dbReference type="EnsemblPlants" id="Os06t0192600-01">
    <property type="protein sequence ID" value="Os06t0192600-01"/>
    <property type="gene ID" value="Os06g0192600"/>
</dbReference>
<dbReference type="Gramene" id="Os02t0784700-01">
    <property type="protein sequence ID" value="Os02t0784700-01"/>
    <property type="gene ID" value="Os02g0784700"/>
</dbReference>
<dbReference type="Gramene" id="Os06t0192600-01">
    <property type="protein sequence ID" value="Os06t0192600-01"/>
    <property type="gene ID" value="Os06g0192600"/>
</dbReference>
<dbReference type="KEGG" id="dosa:Os06g0192600"/>
<dbReference type="InParanoid" id="P0DKK0"/>
<dbReference type="OMA" id="RSKYHIE"/>
<dbReference type="OrthoDB" id="1937997at2759"/>
<dbReference type="Proteomes" id="UP000000763">
    <property type="component" value="Chromosome 6"/>
</dbReference>
<dbReference type="Proteomes" id="UP000007752">
    <property type="component" value="Chromosome 6"/>
</dbReference>
<dbReference type="Proteomes" id="UP000059680">
    <property type="component" value="Chromosome 6"/>
</dbReference>
<dbReference type="ExpressionAtlas" id="P0DKK0">
    <property type="expression patterns" value="baseline and differential"/>
</dbReference>
<dbReference type="GO" id="GO:0005737">
    <property type="term" value="C:cytoplasm"/>
    <property type="evidence" value="ECO:0007669"/>
    <property type="project" value="UniProtKB-SubCell"/>
</dbReference>
<dbReference type="GO" id="GO:0005634">
    <property type="term" value="C:nucleus"/>
    <property type="evidence" value="ECO:0007669"/>
    <property type="project" value="UniProtKB-SubCell"/>
</dbReference>
<dbReference type="GO" id="GO:0000502">
    <property type="term" value="C:proteasome complex"/>
    <property type="evidence" value="ECO:0007669"/>
    <property type="project" value="UniProtKB-KW"/>
</dbReference>
<dbReference type="GO" id="GO:0005524">
    <property type="term" value="F:ATP binding"/>
    <property type="evidence" value="ECO:0007669"/>
    <property type="project" value="UniProtKB-KW"/>
</dbReference>
<dbReference type="GO" id="GO:0016887">
    <property type="term" value="F:ATP hydrolysis activity"/>
    <property type="evidence" value="ECO:0007669"/>
    <property type="project" value="InterPro"/>
</dbReference>
<dbReference type="CDD" id="cd19502">
    <property type="entry name" value="RecA-like_PAN_like"/>
    <property type="match status" value="1"/>
</dbReference>
<dbReference type="FunFam" id="1.10.8.60:FF:000005">
    <property type="entry name" value="26S protease regulatory subunit 7"/>
    <property type="match status" value="1"/>
</dbReference>
<dbReference type="FunFam" id="2.40.50.140:FF:000037">
    <property type="entry name" value="26S protease regulatory subunit 7"/>
    <property type="match status" value="1"/>
</dbReference>
<dbReference type="FunFam" id="3.40.50.300:FF:000027">
    <property type="entry name" value="26S protease regulatory subunit 7"/>
    <property type="match status" value="1"/>
</dbReference>
<dbReference type="Gene3D" id="1.10.8.60">
    <property type="match status" value="1"/>
</dbReference>
<dbReference type="Gene3D" id="2.40.50.140">
    <property type="entry name" value="Nucleic acid-binding proteins"/>
    <property type="match status" value="1"/>
</dbReference>
<dbReference type="Gene3D" id="3.40.50.300">
    <property type="entry name" value="P-loop containing nucleotide triphosphate hydrolases"/>
    <property type="match status" value="1"/>
</dbReference>
<dbReference type="InterPro" id="IPR050221">
    <property type="entry name" value="26S_Proteasome_ATPase"/>
</dbReference>
<dbReference type="InterPro" id="IPR003593">
    <property type="entry name" value="AAA+_ATPase"/>
</dbReference>
<dbReference type="InterPro" id="IPR041569">
    <property type="entry name" value="AAA_lid_3"/>
</dbReference>
<dbReference type="InterPro" id="IPR003959">
    <property type="entry name" value="ATPase_AAA_core"/>
</dbReference>
<dbReference type="InterPro" id="IPR003960">
    <property type="entry name" value="ATPase_AAA_CS"/>
</dbReference>
<dbReference type="InterPro" id="IPR012340">
    <property type="entry name" value="NA-bd_OB-fold"/>
</dbReference>
<dbReference type="InterPro" id="IPR027417">
    <property type="entry name" value="P-loop_NTPase"/>
</dbReference>
<dbReference type="InterPro" id="IPR048723">
    <property type="entry name" value="PRS7-like_OB"/>
</dbReference>
<dbReference type="PANTHER" id="PTHR23073">
    <property type="entry name" value="26S PROTEASOME REGULATORY SUBUNIT"/>
    <property type="match status" value="1"/>
</dbReference>
<dbReference type="Pfam" id="PF00004">
    <property type="entry name" value="AAA"/>
    <property type="match status" value="1"/>
</dbReference>
<dbReference type="Pfam" id="PF17862">
    <property type="entry name" value="AAA_lid_3"/>
    <property type="match status" value="1"/>
</dbReference>
<dbReference type="Pfam" id="PF21236">
    <property type="entry name" value="PRS7_OB"/>
    <property type="match status" value="1"/>
</dbReference>
<dbReference type="SMART" id="SM00382">
    <property type="entry name" value="AAA"/>
    <property type="match status" value="1"/>
</dbReference>
<dbReference type="SUPFAM" id="SSF52540">
    <property type="entry name" value="P-loop containing nucleoside triphosphate hydrolases"/>
    <property type="match status" value="1"/>
</dbReference>
<dbReference type="PROSITE" id="PS00674">
    <property type="entry name" value="AAA"/>
    <property type="match status" value="1"/>
</dbReference>
<comment type="function">
    <text evidence="1">The 26S proteasome is involved in the ATP-dependent degradation of ubiquitinated proteins. The regulatory (or ATPase) complex confers ATP dependency and substrate specificity to the 26S complex (By similarity).</text>
</comment>
<comment type="subcellular location">
    <subcellularLocation>
        <location evidence="3">Cytoplasm</location>
    </subcellularLocation>
    <subcellularLocation>
        <location evidence="3">Nucleus</location>
    </subcellularLocation>
</comment>
<comment type="similarity">
    <text evidence="3">Belongs to the AAA ATPase family.</text>
</comment>
<comment type="sequence caution" evidence="3">
    <conflict type="erroneous initiation">
        <sequence resource="EMBL-CDS" id="EAZ36112"/>
    </conflict>
    <text>Truncated N-terminus.</text>
</comment>
<proteinExistence type="evidence at transcript level"/>
<organism>
    <name type="scientific">Oryza sativa subsp. japonica</name>
    <name type="common">Rice</name>
    <dbReference type="NCBI Taxonomy" id="39947"/>
    <lineage>
        <taxon>Eukaryota</taxon>
        <taxon>Viridiplantae</taxon>
        <taxon>Streptophyta</taxon>
        <taxon>Embryophyta</taxon>
        <taxon>Tracheophyta</taxon>
        <taxon>Spermatophyta</taxon>
        <taxon>Magnoliopsida</taxon>
        <taxon>Liliopsida</taxon>
        <taxon>Poales</taxon>
        <taxon>Poaceae</taxon>
        <taxon>BOP clade</taxon>
        <taxon>Oryzoideae</taxon>
        <taxon>Oryzeae</taxon>
        <taxon>Oryzinae</taxon>
        <taxon>Oryza</taxon>
        <taxon>Oryza sativa</taxon>
    </lineage>
</organism>
<gene>
    <name type="primary">RPT1B</name>
    <name evidence="4" type="ordered locus">Os06g0192600</name>
    <name evidence="3" type="ordered locus">LOC_Os06g09290</name>
    <name evidence="5" type="ORF">OsJ_20424</name>
    <name type="ORF">OSJNBa0090D06.53</name>
    <name type="ORF">P0698A06.13</name>
</gene>
<accession>P0DKK0</accession>
<accession>A3B973</accession>
<accession>Q0DDX2</accession>
<accession>Q6K8W1</accession>
<accession>Q8W3P0</accession>
<accession>Q9FXT9</accession>
<sequence>MAPEPEDDIMNEKNPRPLDEDDIALLKTYGLGPYSTSIKKVEKEIKEMAKKINDLCGIKESDTGLAPPSQWDLVSDKQMMQEEQPLQVARCTKIISPNTDDAKYVINVKQIAKFVVGLGDKVSPTDIEEGMRVGVDRNKYQIQIPLPPKIDPSVTMMTVEEKPDVTYNDVGGCKEQIEKMREVVELPMLHPEKFVKLGIDPPKGVLCYGPPGTGKTLLARAVANRTDACFIRVIGSELVQKYVGEGARMVRELFQMARSKKACIVFFDEVDAIGGARFDDGVGGDNEVQRTMLEIVNQLDGFDARGNIKVLMATNRPDTLDPALLRPGRLDRKVEFGLPDLEGRTQIFKIHTRTMNCERDIRFELLARLCPNSTGADIRSVCTEAGMYAIRARRKTVTEKDFLDAVNKVIKGYQKFSATPKYMVYN</sequence>
<keyword id="KW-0067">ATP-binding</keyword>
<keyword id="KW-0963">Cytoplasm</keyword>
<keyword id="KW-0547">Nucleotide-binding</keyword>
<keyword id="KW-0539">Nucleus</keyword>
<keyword id="KW-0647">Proteasome</keyword>
<keyword id="KW-1185">Reference proteome</keyword>
<protein>
    <recommendedName>
        <fullName>26S proteasome regulatory subunit 7B</fullName>
    </recommendedName>
    <alternativeName>
        <fullName>26S proteasome AAA-ATPase subunit RPT1B</fullName>
    </alternativeName>
    <alternativeName>
        <fullName>26S proteasome subunit 7B</fullName>
    </alternativeName>
    <alternativeName>
        <fullName>Regulatory particle triple-A ATPase subunit 1B</fullName>
    </alternativeName>
</protein>
<reference key="1">
    <citation type="journal article" date="2002" name="Eur. J. Biochem.">
        <title>Identification of the 19S regulatory particle subunits from the rice 26S proteasome.</title>
        <authorList>
            <person name="Shibahara T."/>
            <person name="Kawasaki H."/>
            <person name="Hirano H."/>
        </authorList>
    </citation>
    <scope>NUCLEOTIDE SEQUENCE [MRNA]</scope>
    <source>
        <strain>cv. Nipponbare</strain>
    </source>
</reference>
<reference key="2">
    <citation type="journal article" date="2005" name="Nature">
        <title>The map-based sequence of the rice genome.</title>
        <authorList>
            <consortium name="International rice genome sequencing project (IRGSP)"/>
        </authorList>
    </citation>
    <scope>NUCLEOTIDE SEQUENCE [LARGE SCALE GENOMIC DNA]</scope>
    <source>
        <strain>cv. Nipponbare</strain>
    </source>
</reference>
<reference key="3">
    <citation type="journal article" date="2008" name="Nucleic Acids Res.">
        <title>The rice annotation project database (RAP-DB): 2008 update.</title>
        <authorList>
            <consortium name="The rice annotation project (RAP)"/>
        </authorList>
    </citation>
    <scope>GENOME REANNOTATION</scope>
    <source>
        <strain>cv. Nipponbare</strain>
    </source>
</reference>
<reference key="4">
    <citation type="journal article" date="2013" name="Rice">
        <title>Improvement of the Oryza sativa Nipponbare reference genome using next generation sequence and optical map data.</title>
        <authorList>
            <person name="Kawahara Y."/>
            <person name="de la Bastide M."/>
            <person name="Hamilton J.P."/>
            <person name="Kanamori H."/>
            <person name="McCombie W.R."/>
            <person name="Ouyang S."/>
            <person name="Schwartz D.C."/>
            <person name="Tanaka T."/>
            <person name="Wu J."/>
            <person name="Zhou S."/>
            <person name="Childs K.L."/>
            <person name="Davidson R.M."/>
            <person name="Lin H."/>
            <person name="Quesada-Ocampo L."/>
            <person name="Vaillancourt B."/>
            <person name="Sakai H."/>
            <person name="Lee S.S."/>
            <person name="Kim J."/>
            <person name="Numa H."/>
            <person name="Itoh T."/>
            <person name="Buell C.R."/>
            <person name="Matsumoto T."/>
        </authorList>
    </citation>
    <scope>GENOME REANNOTATION</scope>
    <source>
        <strain>cv. Nipponbare</strain>
    </source>
</reference>
<reference key="5">
    <citation type="journal article" date="2005" name="PLoS Biol.">
        <title>The genomes of Oryza sativa: a history of duplications.</title>
        <authorList>
            <person name="Yu J."/>
            <person name="Wang J."/>
            <person name="Lin W."/>
            <person name="Li S."/>
            <person name="Li H."/>
            <person name="Zhou J."/>
            <person name="Ni P."/>
            <person name="Dong W."/>
            <person name="Hu S."/>
            <person name="Zeng C."/>
            <person name="Zhang J."/>
            <person name="Zhang Y."/>
            <person name="Li R."/>
            <person name="Xu Z."/>
            <person name="Li S."/>
            <person name="Li X."/>
            <person name="Zheng H."/>
            <person name="Cong L."/>
            <person name="Lin L."/>
            <person name="Yin J."/>
            <person name="Geng J."/>
            <person name="Li G."/>
            <person name="Shi J."/>
            <person name="Liu J."/>
            <person name="Lv H."/>
            <person name="Li J."/>
            <person name="Wang J."/>
            <person name="Deng Y."/>
            <person name="Ran L."/>
            <person name="Shi X."/>
            <person name="Wang X."/>
            <person name="Wu Q."/>
            <person name="Li C."/>
            <person name="Ren X."/>
            <person name="Wang J."/>
            <person name="Wang X."/>
            <person name="Li D."/>
            <person name="Liu D."/>
            <person name="Zhang X."/>
            <person name="Ji Z."/>
            <person name="Zhao W."/>
            <person name="Sun Y."/>
            <person name="Zhang Z."/>
            <person name="Bao J."/>
            <person name="Han Y."/>
            <person name="Dong L."/>
            <person name="Ji J."/>
            <person name="Chen P."/>
            <person name="Wu S."/>
            <person name="Liu J."/>
            <person name="Xiao Y."/>
            <person name="Bu D."/>
            <person name="Tan J."/>
            <person name="Yang L."/>
            <person name="Ye C."/>
            <person name="Zhang J."/>
            <person name="Xu J."/>
            <person name="Zhou Y."/>
            <person name="Yu Y."/>
            <person name="Zhang B."/>
            <person name="Zhuang S."/>
            <person name="Wei H."/>
            <person name="Liu B."/>
            <person name="Lei M."/>
            <person name="Yu H."/>
            <person name="Li Y."/>
            <person name="Xu H."/>
            <person name="Wei S."/>
            <person name="He X."/>
            <person name="Fang L."/>
            <person name="Zhang Z."/>
            <person name="Zhang Y."/>
            <person name="Huang X."/>
            <person name="Su Z."/>
            <person name="Tong W."/>
            <person name="Li J."/>
            <person name="Tong Z."/>
            <person name="Li S."/>
            <person name="Ye J."/>
            <person name="Wang L."/>
            <person name="Fang L."/>
            <person name="Lei T."/>
            <person name="Chen C.-S."/>
            <person name="Chen H.-C."/>
            <person name="Xu Z."/>
            <person name="Li H."/>
            <person name="Huang H."/>
            <person name="Zhang F."/>
            <person name="Xu H."/>
            <person name="Li N."/>
            <person name="Zhao C."/>
            <person name="Li S."/>
            <person name="Dong L."/>
            <person name="Huang Y."/>
            <person name="Li L."/>
            <person name="Xi Y."/>
            <person name="Qi Q."/>
            <person name="Li W."/>
            <person name="Zhang B."/>
            <person name="Hu W."/>
            <person name="Zhang Y."/>
            <person name="Tian X."/>
            <person name="Jiao Y."/>
            <person name="Liang X."/>
            <person name="Jin J."/>
            <person name="Gao L."/>
            <person name="Zheng W."/>
            <person name="Hao B."/>
            <person name="Liu S.-M."/>
            <person name="Wang W."/>
            <person name="Yuan L."/>
            <person name="Cao M."/>
            <person name="McDermott J."/>
            <person name="Samudrala R."/>
            <person name="Wang J."/>
            <person name="Wong G.K.-S."/>
            <person name="Yang H."/>
        </authorList>
    </citation>
    <scope>NUCLEOTIDE SEQUENCE [LARGE SCALE GENOMIC DNA]</scope>
    <source>
        <strain>cv. Nipponbare</strain>
    </source>
</reference>
<reference key="6">
    <citation type="journal article" date="2003" name="Science">
        <title>Collection, mapping, and annotation of over 28,000 cDNA clones from japonica rice.</title>
        <authorList>
            <consortium name="The rice full-length cDNA consortium"/>
        </authorList>
    </citation>
    <scope>NUCLEOTIDE SEQUENCE [LARGE SCALE MRNA]</scope>
    <source>
        <strain>cv. Nipponbare</strain>
    </source>
</reference>
<name>PRS7B_ORYSJ</name>
<feature type="chain" id="PRO_0000084715" description="26S proteasome regulatory subunit 7B">
    <location>
        <begin position="1"/>
        <end position="426"/>
    </location>
</feature>
<feature type="binding site" evidence="2">
    <location>
        <begin position="209"/>
        <end position="216"/>
    </location>
    <ligand>
        <name>ATP</name>
        <dbReference type="ChEBI" id="CHEBI:30616"/>
    </ligand>
</feature>
<evidence type="ECO:0000250" key="1"/>
<evidence type="ECO:0000255" key="2"/>
<evidence type="ECO:0000305" key="3"/>
<evidence type="ECO:0000312" key="4">
    <source>
        <dbReference type="EMBL" id="BAF18951.1"/>
    </source>
</evidence>
<evidence type="ECO:0000312" key="5">
    <source>
        <dbReference type="EMBL" id="EAZ36112.1"/>
    </source>
</evidence>